<proteinExistence type="inferred from homology"/>
<protein>
    <recommendedName>
        <fullName evidence="1">Holo-[acyl-carrier-protein] synthase</fullName>
        <shortName evidence="1">Holo-ACP synthase</shortName>
        <ecNumber evidence="1">2.7.8.7</ecNumber>
    </recommendedName>
    <alternativeName>
        <fullName evidence="1">4'-phosphopantetheinyl transferase AcpS</fullName>
    </alternativeName>
</protein>
<keyword id="KW-0963">Cytoplasm</keyword>
<keyword id="KW-0275">Fatty acid biosynthesis</keyword>
<keyword id="KW-0276">Fatty acid metabolism</keyword>
<keyword id="KW-0444">Lipid biosynthesis</keyword>
<keyword id="KW-0443">Lipid metabolism</keyword>
<keyword id="KW-0460">Magnesium</keyword>
<keyword id="KW-0479">Metal-binding</keyword>
<keyword id="KW-1185">Reference proteome</keyword>
<keyword id="KW-0808">Transferase</keyword>
<accession>Q8ZCP5</accession>
<accession>Q0WCX9</accession>
<comment type="function">
    <text evidence="1">Transfers the 4'-phosphopantetheine moiety from coenzyme A to a Ser of acyl-carrier-protein.</text>
</comment>
<comment type="catalytic activity">
    <reaction evidence="1">
        <text>apo-[ACP] + CoA = holo-[ACP] + adenosine 3',5'-bisphosphate + H(+)</text>
        <dbReference type="Rhea" id="RHEA:12068"/>
        <dbReference type="Rhea" id="RHEA-COMP:9685"/>
        <dbReference type="Rhea" id="RHEA-COMP:9690"/>
        <dbReference type="ChEBI" id="CHEBI:15378"/>
        <dbReference type="ChEBI" id="CHEBI:29999"/>
        <dbReference type="ChEBI" id="CHEBI:57287"/>
        <dbReference type="ChEBI" id="CHEBI:58343"/>
        <dbReference type="ChEBI" id="CHEBI:64479"/>
        <dbReference type="EC" id="2.7.8.7"/>
    </reaction>
</comment>
<comment type="cofactor">
    <cofactor evidence="1">
        <name>Mg(2+)</name>
        <dbReference type="ChEBI" id="CHEBI:18420"/>
    </cofactor>
</comment>
<comment type="subcellular location">
    <subcellularLocation>
        <location evidence="1">Cytoplasm</location>
    </subcellularLocation>
</comment>
<comment type="similarity">
    <text evidence="1">Belongs to the P-Pant transferase superfamily. AcpS family.</text>
</comment>
<dbReference type="EC" id="2.7.8.7" evidence="1"/>
<dbReference type="EMBL" id="AL590842">
    <property type="protein sequence ID" value="CAL21537.1"/>
    <property type="molecule type" value="Genomic_DNA"/>
</dbReference>
<dbReference type="EMBL" id="AE009952">
    <property type="protein sequence ID" value="AAM84875.1"/>
    <property type="molecule type" value="Genomic_DNA"/>
</dbReference>
<dbReference type="EMBL" id="AE017042">
    <property type="protein sequence ID" value="AAS62724.1"/>
    <property type="molecule type" value="Genomic_DNA"/>
</dbReference>
<dbReference type="PIR" id="AF0356">
    <property type="entry name" value="AF0356"/>
</dbReference>
<dbReference type="RefSeq" id="WP_002211568.1">
    <property type="nucleotide sequence ID" value="NZ_WUCM01000006.1"/>
</dbReference>
<dbReference type="RefSeq" id="YP_002347859.1">
    <property type="nucleotide sequence ID" value="NC_003143.1"/>
</dbReference>
<dbReference type="SMR" id="Q8ZCP5"/>
<dbReference type="STRING" id="214092.YPO2929"/>
<dbReference type="PaxDb" id="214092-YPO2929"/>
<dbReference type="DNASU" id="1146248"/>
<dbReference type="EnsemblBacteria" id="AAS62724">
    <property type="protein sequence ID" value="AAS62724"/>
    <property type="gene ID" value="YP_2526"/>
</dbReference>
<dbReference type="GeneID" id="57975883"/>
<dbReference type="KEGG" id="ype:YPO2929"/>
<dbReference type="KEGG" id="ypk:y1301"/>
<dbReference type="KEGG" id="ypm:YP_2526"/>
<dbReference type="PATRIC" id="fig|1028802.3.peg.431"/>
<dbReference type="eggNOG" id="COG0736">
    <property type="taxonomic scope" value="Bacteria"/>
</dbReference>
<dbReference type="HOGENOM" id="CLU_089696_3_1_6"/>
<dbReference type="OMA" id="DERHYAV"/>
<dbReference type="OrthoDB" id="517356at2"/>
<dbReference type="Proteomes" id="UP000000815">
    <property type="component" value="Chromosome"/>
</dbReference>
<dbReference type="Proteomes" id="UP000001019">
    <property type="component" value="Chromosome"/>
</dbReference>
<dbReference type="Proteomes" id="UP000002490">
    <property type="component" value="Chromosome"/>
</dbReference>
<dbReference type="GO" id="GO:0005737">
    <property type="term" value="C:cytoplasm"/>
    <property type="evidence" value="ECO:0007669"/>
    <property type="project" value="UniProtKB-SubCell"/>
</dbReference>
<dbReference type="GO" id="GO:0008897">
    <property type="term" value="F:holo-[acyl-carrier-protein] synthase activity"/>
    <property type="evidence" value="ECO:0007669"/>
    <property type="project" value="UniProtKB-UniRule"/>
</dbReference>
<dbReference type="GO" id="GO:0000287">
    <property type="term" value="F:magnesium ion binding"/>
    <property type="evidence" value="ECO:0007669"/>
    <property type="project" value="UniProtKB-UniRule"/>
</dbReference>
<dbReference type="GO" id="GO:0006633">
    <property type="term" value="P:fatty acid biosynthetic process"/>
    <property type="evidence" value="ECO:0007669"/>
    <property type="project" value="UniProtKB-UniRule"/>
</dbReference>
<dbReference type="FunFam" id="3.90.470.20:FF:000001">
    <property type="entry name" value="Holo-[acyl-carrier-protein] synthase"/>
    <property type="match status" value="1"/>
</dbReference>
<dbReference type="Gene3D" id="3.90.470.20">
    <property type="entry name" value="4'-phosphopantetheinyl transferase domain"/>
    <property type="match status" value="1"/>
</dbReference>
<dbReference type="HAMAP" id="MF_00101">
    <property type="entry name" value="AcpS"/>
    <property type="match status" value="1"/>
</dbReference>
<dbReference type="InterPro" id="IPR008278">
    <property type="entry name" value="4-PPantetheinyl_Trfase_dom"/>
</dbReference>
<dbReference type="InterPro" id="IPR037143">
    <property type="entry name" value="4-PPantetheinyl_Trfase_dom_sf"/>
</dbReference>
<dbReference type="InterPro" id="IPR002582">
    <property type="entry name" value="ACPS"/>
</dbReference>
<dbReference type="InterPro" id="IPR004568">
    <property type="entry name" value="Ppantetheine-prot_Trfase_dom"/>
</dbReference>
<dbReference type="NCBIfam" id="TIGR00516">
    <property type="entry name" value="acpS"/>
    <property type="match status" value="1"/>
</dbReference>
<dbReference type="NCBIfam" id="TIGR00556">
    <property type="entry name" value="pantethn_trn"/>
    <property type="match status" value="1"/>
</dbReference>
<dbReference type="Pfam" id="PF01648">
    <property type="entry name" value="ACPS"/>
    <property type="match status" value="1"/>
</dbReference>
<dbReference type="SUPFAM" id="SSF56214">
    <property type="entry name" value="4'-phosphopantetheinyl transferase"/>
    <property type="match status" value="1"/>
</dbReference>
<reference key="1">
    <citation type="journal article" date="2001" name="Nature">
        <title>Genome sequence of Yersinia pestis, the causative agent of plague.</title>
        <authorList>
            <person name="Parkhill J."/>
            <person name="Wren B.W."/>
            <person name="Thomson N.R."/>
            <person name="Titball R.W."/>
            <person name="Holden M.T.G."/>
            <person name="Prentice M.B."/>
            <person name="Sebaihia M."/>
            <person name="James K.D."/>
            <person name="Churcher C.M."/>
            <person name="Mungall K.L."/>
            <person name="Baker S."/>
            <person name="Basham D."/>
            <person name="Bentley S.D."/>
            <person name="Brooks K."/>
            <person name="Cerdeno-Tarraga A.-M."/>
            <person name="Chillingworth T."/>
            <person name="Cronin A."/>
            <person name="Davies R.M."/>
            <person name="Davis P."/>
            <person name="Dougan G."/>
            <person name="Feltwell T."/>
            <person name="Hamlin N."/>
            <person name="Holroyd S."/>
            <person name="Jagels K."/>
            <person name="Karlyshev A.V."/>
            <person name="Leather S."/>
            <person name="Moule S."/>
            <person name="Oyston P.C.F."/>
            <person name="Quail M.A."/>
            <person name="Rutherford K.M."/>
            <person name="Simmonds M."/>
            <person name="Skelton J."/>
            <person name="Stevens K."/>
            <person name="Whitehead S."/>
            <person name="Barrell B.G."/>
        </authorList>
    </citation>
    <scope>NUCLEOTIDE SEQUENCE [LARGE SCALE GENOMIC DNA]</scope>
    <source>
        <strain>CO-92 / Biovar Orientalis</strain>
    </source>
</reference>
<reference key="2">
    <citation type="journal article" date="2002" name="J. Bacteriol.">
        <title>Genome sequence of Yersinia pestis KIM.</title>
        <authorList>
            <person name="Deng W."/>
            <person name="Burland V."/>
            <person name="Plunkett G. III"/>
            <person name="Boutin A."/>
            <person name="Mayhew G.F."/>
            <person name="Liss P."/>
            <person name="Perna N.T."/>
            <person name="Rose D.J."/>
            <person name="Mau B."/>
            <person name="Zhou S."/>
            <person name="Schwartz D.C."/>
            <person name="Fetherston J.D."/>
            <person name="Lindler L.E."/>
            <person name="Brubaker R.R."/>
            <person name="Plano G.V."/>
            <person name="Straley S.C."/>
            <person name="McDonough K.A."/>
            <person name="Nilles M.L."/>
            <person name="Matson J.S."/>
            <person name="Blattner F.R."/>
            <person name="Perry R.D."/>
        </authorList>
    </citation>
    <scope>NUCLEOTIDE SEQUENCE [LARGE SCALE GENOMIC DNA]</scope>
    <source>
        <strain>KIM10+ / Biovar Mediaevalis</strain>
    </source>
</reference>
<reference key="3">
    <citation type="journal article" date="2004" name="DNA Res.">
        <title>Complete genome sequence of Yersinia pestis strain 91001, an isolate avirulent to humans.</title>
        <authorList>
            <person name="Song Y."/>
            <person name="Tong Z."/>
            <person name="Wang J."/>
            <person name="Wang L."/>
            <person name="Guo Z."/>
            <person name="Han Y."/>
            <person name="Zhang J."/>
            <person name="Pei D."/>
            <person name="Zhou D."/>
            <person name="Qin H."/>
            <person name="Pang X."/>
            <person name="Han Y."/>
            <person name="Zhai J."/>
            <person name="Li M."/>
            <person name="Cui B."/>
            <person name="Qi Z."/>
            <person name="Jin L."/>
            <person name="Dai R."/>
            <person name="Chen F."/>
            <person name="Li S."/>
            <person name="Ye C."/>
            <person name="Du Z."/>
            <person name="Lin W."/>
            <person name="Wang J."/>
            <person name="Yu J."/>
            <person name="Yang H."/>
            <person name="Wang J."/>
            <person name="Huang P."/>
            <person name="Yang R."/>
        </authorList>
    </citation>
    <scope>NUCLEOTIDE SEQUENCE [LARGE SCALE GENOMIC DNA]</scope>
    <source>
        <strain>91001 / Biovar Mediaevalis</strain>
    </source>
</reference>
<evidence type="ECO:0000255" key="1">
    <source>
        <dbReference type="HAMAP-Rule" id="MF_00101"/>
    </source>
</evidence>
<feature type="chain" id="PRO_0000175733" description="Holo-[acyl-carrier-protein] synthase">
    <location>
        <begin position="1"/>
        <end position="126"/>
    </location>
</feature>
<feature type="binding site" evidence="1">
    <location>
        <position position="9"/>
    </location>
    <ligand>
        <name>Mg(2+)</name>
        <dbReference type="ChEBI" id="CHEBI:18420"/>
    </ligand>
</feature>
<feature type="binding site" evidence="1">
    <location>
        <position position="58"/>
    </location>
    <ligand>
        <name>Mg(2+)</name>
        <dbReference type="ChEBI" id="CHEBI:18420"/>
    </ligand>
</feature>
<name>ACPS_YERPE</name>
<sequence length="126" mass="13992">MAILGLGTDIVEISRIQAVVERTGERLARRILSPSEWQHYQQHQQPVRFLAKRFAVKEAAAKAFGTGIRNGLAFNQFEVVNDALGKPTLRLHSRAAELAVELGVKSLHVTLADERRYACATVIIES</sequence>
<gene>
    <name evidence="1" type="primary">acpS</name>
    <name type="ordered locus">YPO2929</name>
    <name type="ordered locus">y1301</name>
    <name type="ordered locus">YP_2526</name>
</gene>
<organism>
    <name type="scientific">Yersinia pestis</name>
    <dbReference type="NCBI Taxonomy" id="632"/>
    <lineage>
        <taxon>Bacteria</taxon>
        <taxon>Pseudomonadati</taxon>
        <taxon>Pseudomonadota</taxon>
        <taxon>Gammaproteobacteria</taxon>
        <taxon>Enterobacterales</taxon>
        <taxon>Yersiniaceae</taxon>
        <taxon>Yersinia</taxon>
    </lineage>
</organism>